<evidence type="ECO:0000255" key="1">
    <source>
        <dbReference type="HAMAP-Rule" id="MF_00321"/>
    </source>
</evidence>
<accession>Q9PQM5</accession>
<reference key="1">
    <citation type="journal article" date="2000" name="Nature">
        <title>The complete sequence of the mucosal pathogen Ureaplasma urealyticum.</title>
        <authorList>
            <person name="Glass J.I."/>
            <person name="Lefkowitz E.J."/>
            <person name="Glass J.S."/>
            <person name="Heiner C.R."/>
            <person name="Chen E.Y."/>
            <person name="Cassell G.H."/>
        </authorList>
    </citation>
    <scope>NUCLEOTIDE SEQUENCE [LARGE SCALE GENOMIC DNA]</scope>
    <source>
        <strain>ATCC 700970</strain>
    </source>
</reference>
<proteinExistence type="inferred from homology"/>
<keyword id="KW-0131">Cell cycle</keyword>
<keyword id="KW-0132">Cell division</keyword>
<keyword id="KW-0342">GTP-binding</keyword>
<keyword id="KW-0460">Magnesium</keyword>
<keyword id="KW-0479">Metal-binding</keyword>
<keyword id="KW-0547">Nucleotide-binding</keyword>
<keyword id="KW-1185">Reference proteome</keyword>
<keyword id="KW-0717">Septation</keyword>
<name>ENGB_UREPA</name>
<organism>
    <name type="scientific">Ureaplasma parvum serovar 3 (strain ATCC 700970)</name>
    <dbReference type="NCBI Taxonomy" id="273119"/>
    <lineage>
        <taxon>Bacteria</taxon>
        <taxon>Bacillati</taxon>
        <taxon>Mycoplasmatota</taxon>
        <taxon>Mycoplasmoidales</taxon>
        <taxon>Mycoplasmoidaceae</taxon>
        <taxon>Ureaplasma</taxon>
    </lineage>
</organism>
<dbReference type="EMBL" id="AF222894">
    <property type="protein sequence ID" value="AAF30675.1"/>
    <property type="molecule type" value="Genomic_DNA"/>
</dbReference>
<dbReference type="RefSeq" id="WP_006688825.1">
    <property type="nucleotide sequence ID" value="NC_002162.1"/>
</dbReference>
<dbReference type="SMR" id="Q9PQM5"/>
<dbReference type="STRING" id="273119.UU266"/>
<dbReference type="EnsemblBacteria" id="AAF30675">
    <property type="protein sequence ID" value="AAF30675"/>
    <property type="gene ID" value="UU266"/>
</dbReference>
<dbReference type="GeneID" id="29672535"/>
<dbReference type="KEGG" id="uur:UU266"/>
<dbReference type="eggNOG" id="COG0218">
    <property type="taxonomic scope" value="Bacteria"/>
</dbReference>
<dbReference type="HOGENOM" id="CLU_033732_3_0_14"/>
<dbReference type="OrthoDB" id="9804921at2"/>
<dbReference type="Proteomes" id="UP000000423">
    <property type="component" value="Chromosome"/>
</dbReference>
<dbReference type="GO" id="GO:0005829">
    <property type="term" value="C:cytosol"/>
    <property type="evidence" value="ECO:0007669"/>
    <property type="project" value="TreeGrafter"/>
</dbReference>
<dbReference type="GO" id="GO:0005525">
    <property type="term" value="F:GTP binding"/>
    <property type="evidence" value="ECO:0007669"/>
    <property type="project" value="UniProtKB-UniRule"/>
</dbReference>
<dbReference type="GO" id="GO:0046872">
    <property type="term" value="F:metal ion binding"/>
    <property type="evidence" value="ECO:0007669"/>
    <property type="project" value="UniProtKB-KW"/>
</dbReference>
<dbReference type="GO" id="GO:0000917">
    <property type="term" value="P:division septum assembly"/>
    <property type="evidence" value="ECO:0007669"/>
    <property type="project" value="UniProtKB-KW"/>
</dbReference>
<dbReference type="CDD" id="cd01876">
    <property type="entry name" value="YihA_EngB"/>
    <property type="match status" value="1"/>
</dbReference>
<dbReference type="Gene3D" id="3.40.50.300">
    <property type="entry name" value="P-loop containing nucleotide triphosphate hydrolases"/>
    <property type="match status" value="1"/>
</dbReference>
<dbReference type="HAMAP" id="MF_00321">
    <property type="entry name" value="GTPase_EngB"/>
    <property type="match status" value="1"/>
</dbReference>
<dbReference type="InterPro" id="IPR030393">
    <property type="entry name" value="G_ENGB_dom"/>
</dbReference>
<dbReference type="InterPro" id="IPR006073">
    <property type="entry name" value="GTP-bd"/>
</dbReference>
<dbReference type="InterPro" id="IPR019987">
    <property type="entry name" value="GTP-bd_ribosome_bio_YsxC"/>
</dbReference>
<dbReference type="InterPro" id="IPR027417">
    <property type="entry name" value="P-loop_NTPase"/>
</dbReference>
<dbReference type="InterPro" id="IPR005225">
    <property type="entry name" value="Small_GTP-bd"/>
</dbReference>
<dbReference type="NCBIfam" id="TIGR03598">
    <property type="entry name" value="GTPase_YsxC"/>
    <property type="match status" value="1"/>
</dbReference>
<dbReference type="NCBIfam" id="TIGR00231">
    <property type="entry name" value="small_GTP"/>
    <property type="match status" value="1"/>
</dbReference>
<dbReference type="PANTHER" id="PTHR11649:SF13">
    <property type="entry name" value="ENGB-TYPE G DOMAIN-CONTAINING PROTEIN"/>
    <property type="match status" value="1"/>
</dbReference>
<dbReference type="PANTHER" id="PTHR11649">
    <property type="entry name" value="MSS1/TRME-RELATED GTP-BINDING PROTEIN"/>
    <property type="match status" value="1"/>
</dbReference>
<dbReference type="Pfam" id="PF01926">
    <property type="entry name" value="MMR_HSR1"/>
    <property type="match status" value="1"/>
</dbReference>
<dbReference type="SUPFAM" id="SSF52540">
    <property type="entry name" value="P-loop containing nucleoside triphosphate hydrolases"/>
    <property type="match status" value="1"/>
</dbReference>
<dbReference type="PROSITE" id="PS51706">
    <property type="entry name" value="G_ENGB"/>
    <property type="match status" value="1"/>
</dbReference>
<feature type="chain" id="PRO_0000157796" description="Probable GTP-binding protein EngB">
    <location>
        <begin position="1"/>
        <end position="208"/>
    </location>
</feature>
<feature type="domain" description="EngB-type G" evidence="1">
    <location>
        <begin position="18"/>
        <end position="187"/>
    </location>
</feature>
<feature type="binding site" evidence="1">
    <location>
        <begin position="26"/>
        <end position="33"/>
    </location>
    <ligand>
        <name>GTP</name>
        <dbReference type="ChEBI" id="CHEBI:37565"/>
    </ligand>
</feature>
<feature type="binding site" evidence="1">
    <location>
        <position position="33"/>
    </location>
    <ligand>
        <name>Mg(2+)</name>
        <dbReference type="ChEBI" id="CHEBI:18420"/>
    </ligand>
</feature>
<feature type="binding site" evidence="1">
    <location>
        <begin position="52"/>
        <end position="56"/>
    </location>
    <ligand>
        <name>GTP</name>
        <dbReference type="ChEBI" id="CHEBI:37565"/>
    </ligand>
</feature>
<feature type="binding site" evidence="1">
    <location>
        <position position="54"/>
    </location>
    <ligand>
        <name>Mg(2+)</name>
        <dbReference type="ChEBI" id="CHEBI:18420"/>
    </ligand>
</feature>
<feature type="binding site" evidence="1">
    <location>
        <begin position="69"/>
        <end position="72"/>
    </location>
    <ligand>
        <name>GTP</name>
        <dbReference type="ChEBI" id="CHEBI:37565"/>
    </ligand>
</feature>
<feature type="binding site" evidence="1">
    <location>
        <begin position="135"/>
        <end position="138"/>
    </location>
    <ligand>
        <name>GTP</name>
        <dbReference type="ChEBI" id="CHEBI:37565"/>
    </ligand>
</feature>
<feature type="binding site" evidence="1">
    <location>
        <begin position="166"/>
        <end position="168"/>
    </location>
    <ligand>
        <name>GTP</name>
        <dbReference type="ChEBI" id="CHEBI:37565"/>
    </ligand>
</feature>
<sequence length="208" mass="23968">MAKFIKSAHYFDQYPIDKQFEICVIGRSNVGKSSLINALANKKIARTSNTPGRTQLVNFFDFNNFRLVDLPGYGFAKVSKEKQTDLAAIIDQYLGYRQNLCAVFQICDINVLTNDDVEMSRYFENQKYAHFVVLNKLDKVNKSYFNNNKHKIAKFLNISTDRLLCVSAQNNINIITLFALMKKVVIQAKQEKILSKKEEKMSSEEEIK</sequence>
<gene>
    <name evidence="1" type="primary">engB</name>
    <name type="ordered locus">UU266</name>
</gene>
<protein>
    <recommendedName>
        <fullName evidence="1">Probable GTP-binding protein EngB</fullName>
    </recommendedName>
</protein>
<comment type="function">
    <text evidence="1">Necessary for normal cell division and for the maintenance of normal septation.</text>
</comment>
<comment type="cofactor">
    <cofactor evidence="1">
        <name>Mg(2+)</name>
        <dbReference type="ChEBI" id="CHEBI:18420"/>
    </cofactor>
</comment>
<comment type="similarity">
    <text evidence="1">Belongs to the TRAFAC class TrmE-Era-EngA-EngB-Septin-like GTPase superfamily. EngB GTPase family.</text>
</comment>